<keyword id="KW-0413">Isomerase</keyword>
<keyword id="KW-0460">Magnesium</keyword>
<keyword id="KW-0479">Metal-binding</keyword>
<keyword id="KW-0597">Phosphoprotein</keyword>
<keyword id="KW-1185">Reference proteome</keyword>
<organism>
    <name type="scientific">Aeromonas hydrophila subsp. hydrophila (strain ATCC 7966 / DSM 30187 / BCRC 13018 / CCUG 14551 / JCM 1027 / KCTC 2358 / NCIMB 9240 / NCTC 8049)</name>
    <dbReference type="NCBI Taxonomy" id="380703"/>
    <lineage>
        <taxon>Bacteria</taxon>
        <taxon>Pseudomonadati</taxon>
        <taxon>Pseudomonadota</taxon>
        <taxon>Gammaproteobacteria</taxon>
        <taxon>Aeromonadales</taxon>
        <taxon>Aeromonadaceae</taxon>
        <taxon>Aeromonas</taxon>
    </lineage>
</organism>
<protein>
    <recommendedName>
        <fullName evidence="1">Phosphoglucosamine mutase</fullName>
        <ecNumber evidence="1">5.4.2.10</ecNumber>
    </recommendedName>
</protein>
<proteinExistence type="inferred from homology"/>
<evidence type="ECO:0000255" key="1">
    <source>
        <dbReference type="HAMAP-Rule" id="MF_01554"/>
    </source>
</evidence>
<comment type="function">
    <text evidence="1">Catalyzes the conversion of glucosamine-6-phosphate to glucosamine-1-phosphate.</text>
</comment>
<comment type="catalytic activity">
    <reaction evidence="1">
        <text>alpha-D-glucosamine 1-phosphate = D-glucosamine 6-phosphate</text>
        <dbReference type="Rhea" id="RHEA:23424"/>
        <dbReference type="ChEBI" id="CHEBI:58516"/>
        <dbReference type="ChEBI" id="CHEBI:58725"/>
        <dbReference type="EC" id="5.4.2.10"/>
    </reaction>
</comment>
<comment type="cofactor">
    <cofactor evidence="1">
        <name>Mg(2+)</name>
        <dbReference type="ChEBI" id="CHEBI:18420"/>
    </cofactor>
    <text evidence="1">Binds 1 Mg(2+) ion per subunit.</text>
</comment>
<comment type="PTM">
    <text evidence="1">Activated by phosphorylation.</text>
</comment>
<comment type="similarity">
    <text evidence="1">Belongs to the phosphohexose mutase family.</text>
</comment>
<feature type="chain" id="PRO_0000305632" description="Phosphoglucosamine mutase">
    <location>
        <begin position="1"/>
        <end position="444"/>
    </location>
</feature>
<feature type="active site" description="Phosphoserine intermediate" evidence="1">
    <location>
        <position position="101"/>
    </location>
</feature>
<feature type="binding site" description="via phosphate group" evidence="1">
    <location>
        <position position="101"/>
    </location>
    <ligand>
        <name>Mg(2+)</name>
        <dbReference type="ChEBI" id="CHEBI:18420"/>
    </ligand>
</feature>
<feature type="binding site" evidence="1">
    <location>
        <position position="240"/>
    </location>
    <ligand>
        <name>Mg(2+)</name>
        <dbReference type="ChEBI" id="CHEBI:18420"/>
    </ligand>
</feature>
<feature type="binding site" evidence="1">
    <location>
        <position position="242"/>
    </location>
    <ligand>
        <name>Mg(2+)</name>
        <dbReference type="ChEBI" id="CHEBI:18420"/>
    </ligand>
</feature>
<feature type="binding site" evidence="1">
    <location>
        <position position="244"/>
    </location>
    <ligand>
        <name>Mg(2+)</name>
        <dbReference type="ChEBI" id="CHEBI:18420"/>
    </ligand>
</feature>
<feature type="modified residue" description="Phosphoserine" evidence="1">
    <location>
        <position position="101"/>
    </location>
</feature>
<reference key="1">
    <citation type="journal article" date="2006" name="J. Bacteriol.">
        <title>Genome sequence of Aeromonas hydrophila ATCC 7966T: jack of all trades.</title>
        <authorList>
            <person name="Seshadri R."/>
            <person name="Joseph S.W."/>
            <person name="Chopra A.K."/>
            <person name="Sha J."/>
            <person name="Shaw J."/>
            <person name="Graf J."/>
            <person name="Haft D.H."/>
            <person name="Wu M."/>
            <person name="Ren Q."/>
            <person name="Rosovitz M.J."/>
            <person name="Madupu R."/>
            <person name="Tallon L."/>
            <person name="Kim M."/>
            <person name="Jin S."/>
            <person name="Vuong H."/>
            <person name="Stine O.C."/>
            <person name="Ali A."/>
            <person name="Horneman A.J."/>
            <person name="Heidelberg J.F."/>
        </authorList>
    </citation>
    <scope>NUCLEOTIDE SEQUENCE [LARGE SCALE GENOMIC DNA]</scope>
    <source>
        <strain>ATCC 7966 / DSM 30187 / BCRC 13018 / CCUG 14551 / JCM 1027 / KCTC 2358 / NCIMB 9240 / NCTC 8049</strain>
    </source>
</reference>
<sequence>MARKYFGTDGVRGKVGEYPITPDFVMKLGWAAGKVLSKKGTRKVLIGKDTRISGYMLESALEAGLSAAGLKAILMGPMPTPAVAYLTRTFRAEAGIVISASHNPYYDNGIKFFSADGTKLPDEVEMAIEAELDHELKCVESAELGKALRIDDAAGRYIEFCKSTFPSNLSLEGLKMVVDCGHGATYHIAPSVFRELGAEVIAIGCSPDGLNINDGVGSTAPEALAAKVLECKADLGVAFDGDGDRLVMVDNTGYIIDGDEILYIIARDALRNGRLKGGVVGTLMANMGLELALQTLGIPFARAKVGDRYVLEMMNEKGWRIGGENSGHIICLDQTTTGDGIVAALQVLTAICTAEMPLAKLRSGMNKFPQVLVNVRFAEGRDPLAADAVQQEVAKVEQELAGRGRVLLRKSGTEPLIRVMVEGEHEQQVRDMAQRIAQQVESAF</sequence>
<gene>
    <name evidence="1" type="primary">glmM</name>
    <name type="ordered locus">AHA_3310</name>
</gene>
<dbReference type="EC" id="5.4.2.10" evidence="1"/>
<dbReference type="EMBL" id="CP000462">
    <property type="protein sequence ID" value="ABK38205.1"/>
    <property type="molecule type" value="Genomic_DNA"/>
</dbReference>
<dbReference type="RefSeq" id="WP_011707078.1">
    <property type="nucleotide sequence ID" value="NC_008570.1"/>
</dbReference>
<dbReference type="RefSeq" id="YP_857799.1">
    <property type="nucleotide sequence ID" value="NC_008570.1"/>
</dbReference>
<dbReference type="SMR" id="A0KNE8"/>
<dbReference type="STRING" id="380703.AHA_3310"/>
<dbReference type="EnsemblBacteria" id="ABK38205">
    <property type="protein sequence ID" value="ABK38205"/>
    <property type="gene ID" value="AHA_3310"/>
</dbReference>
<dbReference type="GeneID" id="4490972"/>
<dbReference type="KEGG" id="aha:AHA_3310"/>
<dbReference type="PATRIC" id="fig|380703.7.peg.3304"/>
<dbReference type="eggNOG" id="COG1109">
    <property type="taxonomic scope" value="Bacteria"/>
</dbReference>
<dbReference type="HOGENOM" id="CLU_016950_7_0_6"/>
<dbReference type="OrthoDB" id="9803322at2"/>
<dbReference type="Proteomes" id="UP000000756">
    <property type="component" value="Chromosome"/>
</dbReference>
<dbReference type="GO" id="GO:0005829">
    <property type="term" value="C:cytosol"/>
    <property type="evidence" value="ECO:0007669"/>
    <property type="project" value="TreeGrafter"/>
</dbReference>
<dbReference type="GO" id="GO:0000287">
    <property type="term" value="F:magnesium ion binding"/>
    <property type="evidence" value="ECO:0007669"/>
    <property type="project" value="UniProtKB-UniRule"/>
</dbReference>
<dbReference type="GO" id="GO:0008966">
    <property type="term" value="F:phosphoglucosamine mutase activity"/>
    <property type="evidence" value="ECO:0007669"/>
    <property type="project" value="UniProtKB-UniRule"/>
</dbReference>
<dbReference type="GO" id="GO:0004615">
    <property type="term" value="F:phosphomannomutase activity"/>
    <property type="evidence" value="ECO:0007669"/>
    <property type="project" value="TreeGrafter"/>
</dbReference>
<dbReference type="GO" id="GO:0005975">
    <property type="term" value="P:carbohydrate metabolic process"/>
    <property type="evidence" value="ECO:0007669"/>
    <property type="project" value="InterPro"/>
</dbReference>
<dbReference type="GO" id="GO:0009252">
    <property type="term" value="P:peptidoglycan biosynthetic process"/>
    <property type="evidence" value="ECO:0007669"/>
    <property type="project" value="TreeGrafter"/>
</dbReference>
<dbReference type="GO" id="GO:0006048">
    <property type="term" value="P:UDP-N-acetylglucosamine biosynthetic process"/>
    <property type="evidence" value="ECO:0007669"/>
    <property type="project" value="TreeGrafter"/>
</dbReference>
<dbReference type="CDD" id="cd05802">
    <property type="entry name" value="GlmM"/>
    <property type="match status" value="1"/>
</dbReference>
<dbReference type="FunFam" id="3.30.310.50:FF:000001">
    <property type="entry name" value="Phosphoglucosamine mutase"/>
    <property type="match status" value="1"/>
</dbReference>
<dbReference type="FunFam" id="3.40.120.10:FF:000001">
    <property type="entry name" value="Phosphoglucosamine mutase"/>
    <property type="match status" value="1"/>
</dbReference>
<dbReference type="FunFam" id="3.40.120.10:FF:000002">
    <property type="entry name" value="Phosphoglucosamine mutase"/>
    <property type="match status" value="1"/>
</dbReference>
<dbReference type="Gene3D" id="3.40.120.10">
    <property type="entry name" value="Alpha-D-Glucose-1,6-Bisphosphate, subunit A, domain 3"/>
    <property type="match status" value="3"/>
</dbReference>
<dbReference type="Gene3D" id="3.30.310.50">
    <property type="entry name" value="Alpha-D-phosphohexomutase, C-terminal domain"/>
    <property type="match status" value="1"/>
</dbReference>
<dbReference type="HAMAP" id="MF_01554_B">
    <property type="entry name" value="GlmM_B"/>
    <property type="match status" value="1"/>
</dbReference>
<dbReference type="InterPro" id="IPR005844">
    <property type="entry name" value="A-D-PHexomutase_a/b/a-I"/>
</dbReference>
<dbReference type="InterPro" id="IPR016055">
    <property type="entry name" value="A-D-PHexomutase_a/b/a-I/II/III"/>
</dbReference>
<dbReference type="InterPro" id="IPR005845">
    <property type="entry name" value="A-D-PHexomutase_a/b/a-II"/>
</dbReference>
<dbReference type="InterPro" id="IPR005846">
    <property type="entry name" value="A-D-PHexomutase_a/b/a-III"/>
</dbReference>
<dbReference type="InterPro" id="IPR005843">
    <property type="entry name" value="A-D-PHexomutase_C"/>
</dbReference>
<dbReference type="InterPro" id="IPR036900">
    <property type="entry name" value="A-D-PHexomutase_C_sf"/>
</dbReference>
<dbReference type="InterPro" id="IPR016066">
    <property type="entry name" value="A-D-PHexomutase_CS"/>
</dbReference>
<dbReference type="InterPro" id="IPR005841">
    <property type="entry name" value="Alpha-D-phosphohexomutase_SF"/>
</dbReference>
<dbReference type="InterPro" id="IPR006352">
    <property type="entry name" value="GlmM_bact"/>
</dbReference>
<dbReference type="InterPro" id="IPR050060">
    <property type="entry name" value="Phosphoglucosamine_mutase"/>
</dbReference>
<dbReference type="NCBIfam" id="TIGR01455">
    <property type="entry name" value="glmM"/>
    <property type="match status" value="1"/>
</dbReference>
<dbReference type="NCBIfam" id="NF008139">
    <property type="entry name" value="PRK10887.1"/>
    <property type="match status" value="1"/>
</dbReference>
<dbReference type="PANTHER" id="PTHR42946:SF1">
    <property type="entry name" value="PHOSPHOGLUCOMUTASE (ALPHA-D-GLUCOSE-1,6-BISPHOSPHATE-DEPENDENT)"/>
    <property type="match status" value="1"/>
</dbReference>
<dbReference type="PANTHER" id="PTHR42946">
    <property type="entry name" value="PHOSPHOHEXOSE MUTASE"/>
    <property type="match status" value="1"/>
</dbReference>
<dbReference type="Pfam" id="PF02878">
    <property type="entry name" value="PGM_PMM_I"/>
    <property type="match status" value="1"/>
</dbReference>
<dbReference type="Pfam" id="PF02879">
    <property type="entry name" value="PGM_PMM_II"/>
    <property type="match status" value="1"/>
</dbReference>
<dbReference type="Pfam" id="PF02880">
    <property type="entry name" value="PGM_PMM_III"/>
    <property type="match status" value="1"/>
</dbReference>
<dbReference type="Pfam" id="PF00408">
    <property type="entry name" value="PGM_PMM_IV"/>
    <property type="match status" value="1"/>
</dbReference>
<dbReference type="PRINTS" id="PR00509">
    <property type="entry name" value="PGMPMM"/>
</dbReference>
<dbReference type="SUPFAM" id="SSF55957">
    <property type="entry name" value="Phosphoglucomutase, C-terminal domain"/>
    <property type="match status" value="1"/>
</dbReference>
<dbReference type="SUPFAM" id="SSF53738">
    <property type="entry name" value="Phosphoglucomutase, first 3 domains"/>
    <property type="match status" value="3"/>
</dbReference>
<dbReference type="PROSITE" id="PS00710">
    <property type="entry name" value="PGM_PMM"/>
    <property type="match status" value="1"/>
</dbReference>
<name>GLMM_AERHH</name>
<accession>A0KNE8</accession>